<proteinExistence type="evidence at transcript level"/>
<dbReference type="EMBL" id="AB010694">
    <property type="protein sequence ID" value="BAB09385.1"/>
    <property type="status" value="ALT_INIT"/>
    <property type="molecule type" value="Genomic_DNA"/>
</dbReference>
<dbReference type="EMBL" id="CP002688">
    <property type="protein sequence ID" value="AED94417.2"/>
    <property type="molecule type" value="Genomic_DNA"/>
</dbReference>
<dbReference type="EMBL" id="BX832887">
    <property type="status" value="NOT_ANNOTATED_CDS"/>
    <property type="molecule type" value="mRNA"/>
</dbReference>
<dbReference type="RefSeq" id="NP_198746.2">
    <property type="nucleotide sequence ID" value="NM_123292.2"/>
</dbReference>
<dbReference type="SMR" id="Q9FL77"/>
<dbReference type="STRING" id="3702.Q9FL77"/>
<dbReference type="PaxDb" id="3702-AT5G39300.1"/>
<dbReference type="ProteomicsDB" id="222310"/>
<dbReference type="EnsemblPlants" id="AT5G39300.1">
    <property type="protein sequence ID" value="AT5G39300.1"/>
    <property type="gene ID" value="AT5G39300"/>
</dbReference>
<dbReference type="GeneID" id="833926"/>
<dbReference type="Gramene" id="AT5G39300.1">
    <property type="protein sequence ID" value="AT5G39300.1"/>
    <property type="gene ID" value="AT5G39300"/>
</dbReference>
<dbReference type="KEGG" id="ath:AT5G39300"/>
<dbReference type="Araport" id="AT5G39300"/>
<dbReference type="TAIR" id="AT5G39300">
    <property type="gene designation" value="EXPA25"/>
</dbReference>
<dbReference type="eggNOG" id="ENOG502QQNJ">
    <property type="taxonomic scope" value="Eukaryota"/>
</dbReference>
<dbReference type="HOGENOM" id="CLU_027462_0_1_1"/>
<dbReference type="InParanoid" id="Q9FL77"/>
<dbReference type="OMA" id="CIPNSGT"/>
<dbReference type="OrthoDB" id="5823761at2759"/>
<dbReference type="PhylomeDB" id="Q9FL77"/>
<dbReference type="PRO" id="PR:Q9FL77"/>
<dbReference type="Proteomes" id="UP000006548">
    <property type="component" value="Chromosome 5"/>
</dbReference>
<dbReference type="ExpressionAtlas" id="Q9FL77">
    <property type="expression patterns" value="baseline and differential"/>
</dbReference>
<dbReference type="GO" id="GO:0005576">
    <property type="term" value="C:extracellular region"/>
    <property type="evidence" value="ECO:0007669"/>
    <property type="project" value="UniProtKB-KW"/>
</dbReference>
<dbReference type="GO" id="GO:0016020">
    <property type="term" value="C:membrane"/>
    <property type="evidence" value="ECO:0007669"/>
    <property type="project" value="UniProtKB-SubCell"/>
</dbReference>
<dbReference type="GO" id="GO:0009653">
    <property type="term" value="P:anatomical structure morphogenesis"/>
    <property type="evidence" value="ECO:0007669"/>
    <property type="project" value="UniProtKB-ARBA"/>
</dbReference>
<dbReference type="GO" id="GO:0009828">
    <property type="term" value="P:plant-type cell wall loosening"/>
    <property type="evidence" value="ECO:0000250"/>
    <property type="project" value="UniProtKB"/>
</dbReference>
<dbReference type="CDD" id="cd22274">
    <property type="entry name" value="DPBB_EXPA_N"/>
    <property type="match status" value="1"/>
</dbReference>
<dbReference type="Gene3D" id="2.60.40.760">
    <property type="entry name" value="Expansin, cellulose-binding-like domain"/>
    <property type="match status" value="1"/>
</dbReference>
<dbReference type="Gene3D" id="2.40.40.10">
    <property type="entry name" value="RlpA-like domain"/>
    <property type="match status" value="1"/>
</dbReference>
<dbReference type="InterPro" id="IPR007118">
    <property type="entry name" value="Expan_Lol_pI"/>
</dbReference>
<dbReference type="InterPro" id="IPR002963">
    <property type="entry name" value="Expansin"/>
</dbReference>
<dbReference type="InterPro" id="IPR007112">
    <property type="entry name" value="Expansin/allergen_DPBB_dom"/>
</dbReference>
<dbReference type="InterPro" id="IPR007117">
    <property type="entry name" value="Expansin_CBD"/>
</dbReference>
<dbReference type="InterPro" id="IPR036749">
    <property type="entry name" value="Expansin_CBD_sf"/>
</dbReference>
<dbReference type="InterPro" id="IPR009009">
    <property type="entry name" value="RlpA-like_DPBB"/>
</dbReference>
<dbReference type="InterPro" id="IPR036908">
    <property type="entry name" value="RlpA-like_sf"/>
</dbReference>
<dbReference type="PANTHER" id="PTHR31867">
    <property type="entry name" value="EXPANSIN-A15"/>
    <property type="match status" value="1"/>
</dbReference>
<dbReference type="Pfam" id="PF03330">
    <property type="entry name" value="DPBB_1"/>
    <property type="match status" value="1"/>
</dbReference>
<dbReference type="Pfam" id="PF01357">
    <property type="entry name" value="Expansin_C"/>
    <property type="match status" value="1"/>
</dbReference>
<dbReference type="PRINTS" id="PR01226">
    <property type="entry name" value="EXPANSIN"/>
</dbReference>
<dbReference type="PRINTS" id="PR01225">
    <property type="entry name" value="EXPANSNFAMLY"/>
</dbReference>
<dbReference type="SMART" id="SM00837">
    <property type="entry name" value="DPBB_1"/>
    <property type="match status" value="1"/>
</dbReference>
<dbReference type="SUPFAM" id="SSF50685">
    <property type="entry name" value="Barwin-like endoglucanases"/>
    <property type="match status" value="1"/>
</dbReference>
<dbReference type="SUPFAM" id="SSF49590">
    <property type="entry name" value="PHL pollen allergen"/>
    <property type="match status" value="1"/>
</dbReference>
<dbReference type="PROSITE" id="PS50843">
    <property type="entry name" value="EXPANSIN_CBD"/>
    <property type="match status" value="1"/>
</dbReference>
<dbReference type="PROSITE" id="PS50842">
    <property type="entry name" value="EXPANSIN_EG45"/>
    <property type="match status" value="1"/>
</dbReference>
<feature type="signal peptide" evidence="2">
    <location>
        <begin position="1"/>
        <end position="27"/>
    </location>
</feature>
<feature type="chain" id="PRO_0000008705" description="Expansin-A25">
    <location>
        <begin position="28"/>
        <end position="276"/>
    </location>
</feature>
<feature type="domain" description="Expansin-like EG45" evidence="4">
    <location>
        <begin position="73"/>
        <end position="183"/>
    </location>
</feature>
<feature type="domain" description="Expansin-like CBD" evidence="3">
    <location>
        <begin position="193"/>
        <end position="272"/>
    </location>
</feature>
<comment type="function">
    <text evidence="1">Causes loosening and extension of plant cell walls by disrupting non-covalent bonding between cellulose microfibrils and matrix glucans. No enzymatic activity has been found (By similarity).</text>
</comment>
<comment type="subcellular location">
    <subcellularLocation>
        <location>Secreted</location>
        <location>Cell wall</location>
    </subcellularLocation>
    <subcellularLocation>
        <location>Membrane</location>
        <topology>Peripheral membrane protein</topology>
    </subcellularLocation>
</comment>
<comment type="similarity">
    <text evidence="5">Belongs to the expansin family. Expansin A subfamily.</text>
</comment>
<comment type="sequence caution" evidence="5">
    <conflict type="erroneous initiation">
        <sequence resource="EMBL-CDS" id="BAB09385"/>
    </conflict>
    <text>Truncated N-terminus.</text>
</comment>
<comment type="sequence caution" evidence="5">
    <conflict type="miscellaneous discrepancy">
        <sequence resource="EMBL" id="BX832887"/>
    </conflict>
    <text>Sequencing errors.</text>
</comment>
<comment type="online information" name="EXPANSIN homepage">
    <link uri="https://www.dept.psu.edu/biology/groups/expansins/index.htm"/>
</comment>
<name>EXP25_ARATH</name>
<reference key="1">
    <citation type="journal article" date="1998" name="DNA Res.">
        <title>Structural analysis of Arabidopsis thaliana chromosome 5. V. Sequence features of the regions of 1,381,565 bp covered by twenty one physically assigned P1 and TAC clones.</title>
        <authorList>
            <person name="Kaneko T."/>
            <person name="Kotani H."/>
            <person name="Nakamura Y."/>
            <person name="Sato S."/>
            <person name="Asamizu E."/>
            <person name="Miyajima N."/>
            <person name="Tabata S."/>
        </authorList>
    </citation>
    <scope>NUCLEOTIDE SEQUENCE [LARGE SCALE GENOMIC DNA]</scope>
    <source>
        <strain>cv. Columbia</strain>
    </source>
</reference>
<reference key="2">
    <citation type="journal article" date="2017" name="Plant J.">
        <title>Araport11: a complete reannotation of the Arabidopsis thaliana reference genome.</title>
        <authorList>
            <person name="Cheng C.Y."/>
            <person name="Krishnakumar V."/>
            <person name="Chan A.P."/>
            <person name="Thibaud-Nissen F."/>
            <person name="Schobel S."/>
            <person name="Town C.D."/>
        </authorList>
    </citation>
    <scope>GENOME REANNOTATION</scope>
    <source>
        <strain>cv. Columbia</strain>
    </source>
</reference>
<reference key="3">
    <citation type="journal article" date="2004" name="Genome Res.">
        <title>Whole genome sequence comparisons and 'full-length' cDNA sequences: a combined approach to evaluate and improve Arabidopsis genome annotation.</title>
        <authorList>
            <person name="Castelli V."/>
            <person name="Aury J.-M."/>
            <person name="Jaillon O."/>
            <person name="Wincker P."/>
            <person name="Clepet C."/>
            <person name="Menard M."/>
            <person name="Cruaud C."/>
            <person name="Quetier F."/>
            <person name="Scarpelli C."/>
            <person name="Schaechter V."/>
            <person name="Temple G."/>
            <person name="Caboche M."/>
            <person name="Weissenbach J."/>
            <person name="Salanoubat M."/>
        </authorList>
    </citation>
    <scope>NUCLEOTIDE SEQUENCE [LARGE SCALE MRNA]</scope>
    <source>
        <strain>cv. Columbia</strain>
    </source>
</reference>
<reference key="4">
    <citation type="journal article" date="2004" name="Plant Mol. Biol.">
        <title>Nomenclature for members of the expansin superfamily of genes and proteins.</title>
        <authorList>
            <person name="Kende H."/>
            <person name="Bradford K.J."/>
            <person name="Brummell D.A."/>
            <person name="Cho H.-T."/>
            <person name="Cosgrove D.J."/>
            <person name="Fleming A.J."/>
            <person name="Gehring C."/>
            <person name="Lee Y."/>
            <person name="McQueen-Mason S.J."/>
            <person name="Rose J.K.C."/>
            <person name="Voesenek L.A.C."/>
        </authorList>
    </citation>
    <scope>NOMENCLATURE</scope>
</reference>
<evidence type="ECO:0000250" key="1"/>
<evidence type="ECO:0000255" key="2"/>
<evidence type="ECO:0000255" key="3">
    <source>
        <dbReference type="PROSITE-ProRule" id="PRU00078"/>
    </source>
</evidence>
<evidence type="ECO:0000255" key="4">
    <source>
        <dbReference type="PROSITE-ProRule" id="PRU00079"/>
    </source>
</evidence>
<evidence type="ECO:0000305" key="5"/>
<protein>
    <recommendedName>
        <fullName>Expansin-A25</fullName>
        <shortName>AtEXPA25</shortName>
    </recommendedName>
    <alternativeName>
        <fullName>Alpha-expansin-25</fullName>
        <shortName>At-EXP25</shortName>
        <shortName>AtEx25</shortName>
    </alternativeName>
    <alternativeName>
        <fullName>Ath-ExpAlpha-1.18</fullName>
    </alternativeName>
</protein>
<keyword id="KW-0134">Cell wall</keyword>
<keyword id="KW-0961">Cell wall biogenesis/degradation</keyword>
<keyword id="KW-0472">Membrane</keyword>
<keyword id="KW-1185">Reference proteome</keyword>
<keyword id="KW-0964">Secreted</keyword>
<keyword id="KW-0732">Signal</keyword>
<organism>
    <name type="scientific">Arabidopsis thaliana</name>
    <name type="common">Mouse-ear cress</name>
    <dbReference type="NCBI Taxonomy" id="3702"/>
    <lineage>
        <taxon>Eukaryota</taxon>
        <taxon>Viridiplantae</taxon>
        <taxon>Streptophyta</taxon>
        <taxon>Embryophyta</taxon>
        <taxon>Tracheophyta</taxon>
        <taxon>Spermatophyta</taxon>
        <taxon>Magnoliopsida</taxon>
        <taxon>eudicotyledons</taxon>
        <taxon>Gunneridae</taxon>
        <taxon>Pentapetalae</taxon>
        <taxon>rosids</taxon>
        <taxon>malvids</taxon>
        <taxon>Brassicales</taxon>
        <taxon>Brassicaceae</taxon>
        <taxon>Camelineae</taxon>
        <taxon>Arabidopsis</taxon>
    </lineage>
</organism>
<gene>
    <name type="primary">EXPA25</name>
    <name type="synonym">EXP25</name>
    <name type="ordered locus">At5g39300</name>
    <name type="ORF">K3K3.21</name>
    <name type="ORF">K3K3_150</name>
</gene>
<sequence length="276" mass="30491">MKLLEQMVYVECFMIIMATLLVSMSYGHRAMINDVAEAPVIDNVGSPTNGLDSSWYDARATFYGDIHGGETQQGACGYGDLFKQGYGLETAALSTALFNEGYTCGACYQIMCVHDPQWCLPGTIKITATNFCPPDYSKTEGVWCNPPQKHFDLSLPMFLKIAQYKAGVVPVKYRRISCARTGGVKFETKGNPYFLMILPYNVGGAGDIKLMQVKGDKTGWITMQKNWGQNWTTGVNLTGQGISFRVTTSDGVTKDFNNVMPNNWGFGQTFDGKINF</sequence>
<accession>Q9FL77</accession>
<accession>F4KED9</accession>